<dbReference type="EC" id="1.8.4.8" evidence="1"/>
<dbReference type="EMBL" id="CP000238">
    <property type="protein sequence ID" value="ABF14272.1"/>
    <property type="molecule type" value="Genomic_DNA"/>
</dbReference>
<dbReference type="RefSeq" id="WP_011520404.1">
    <property type="nucleotide sequence ID" value="NC_007984.1"/>
</dbReference>
<dbReference type="SMR" id="Q1LTP3"/>
<dbReference type="STRING" id="374463.BCI_0216"/>
<dbReference type="KEGG" id="bci:BCI_0216"/>
<dbReference type="HOGENOM" id="CLU_044089_3_0_6"/>
<dbReference type="OrthoDB" id="9794018at2"/>
<dbReference type="UniPathway" id="UPA00140">
    <property type="reaction ID" value="UER00206"/>
</dbReference>
<dbReference type="Proteomes" id="UP000002427">
    <property type="component" value="Chromosome"/>
</dbReference>
<dbReference type="GO" id="GO:0005737">
    <property type="term" value="C:cytoplasm"/>
    <property type="evidence" value="ECO:0007669"/>
    <property type="project" value="UniProtKB-SubCell"/>
</dbReference>
<dbReference type="GO" id="GO:0004604">
    <property type="term" value="F:phosphoadenylyl-sulfate reductase (thioredoxin) activity"/>
    <property type="evidence" value="ECO:0007669"/>
    <property type="project" value="UniProtKB-UniRule"/>
</dbReference>
<dbReference type="GO" id="GO:0070814">
    <property type="term" value="P:hydrogen sulfide biosynthetic process"/>
    <property type="evidence" value="ECO:0007669"/>
    <property type="project" value="UniProtKB-UniRule"/>
</dbReference>
<dbReference type="GO" id="GO:0019379">
    <property type="term" value="P:sulfate assimilation, phosphoadenylyl sulfate reduction by phosphoadenylyl-sulfate reductase (thioredoxin)"/>
    <property type="evidence" value="ECO:0007669"/>
    <property type="project" value="UniProtKB-UniRule"/>
</dbReference>
<dbReference type="CDD" id="cd23945">
    <property type="entry name" value="PAPS_reductase"/>
    <property type="match status" value="1"/>
</dbReference>
<dbReference type="FunFam" id="3.40.50.620:FF:000043">
    <property type="entry name" value="Phosphoadenosine phosphosulfate reductase"/>
    <property type="match status" value="1"/>
</dbReference>
<dbReference type="Gene3D" id="3.40.50.620">
    <property type="entry name" value="HUPs"/>
    <property type="match status" value="1"/>
</dbReference>
<dbReference type="HAMAP" id="MF_00063">
    <property type="entry name" value="CysH"/>
    <property type="match status" value="1"/>
</dbReference>
<dbReference type="InterPro" id="IPR004511">
    <property type="entry name" value="PAPS/APS_Rdtase"/>
</dbReference>
<dbReference type="InterPro" id="IPR002500">
    <property type="entry name" value="PAPS_reduct_dom"/>
</dbReference>
<dbReference type="InterPro" id="IPR011800">
    <property type="entry name" value="PAPS_reductase_CysH"/>
</dbReference>
<dbReference type="InterPro" id="IPR014729">
    <property type="entry name" value="Rossmann-like_a/b/a_fold"/>
</dbReference>
<dbReference type="NCBIfam" id="TIGR00434">
    <property type="entry name" value="cysH"/>
    <property type="match status" value="1"/>
</dbReference>
<dbReference type="NCBIfam" id="TIGR02057">
    <property type="entry name" value="PAPS_reductase"/>
    <property type="match status" value="1"/>
</dbReference>
<dbReference type="NCBIfam" id="NF002537">
    <property type="entry name" value="PRK02090.1"/>
    <property type="match status" value="1"/>
</dbReference>
<dbReference type="PANTHER" id="PTHR46509">
    <property type="entry name" value="PHOSPHOADENOSINE PHOSPHOSULFATE REDUCTASE"/>
    <property type="match status" value="1"/>
</dbReference>
<dbReference type="PANTHER" id="PTHR46509:SF1">
    <property type="entry name" value="PHOSPHOADENOSINE PHOSPHOSULFATE REDUCTASE"/>
    <property type="match status" value="1"/>
</dbReference>
<dbReference type="Pfam" id="PF01507">
    <property type="entry name" value="PAPS_reduct"/>
    <property type="match status" value="1"/>
</dbReference>
<dbReference type="PIRSF" id="PIRSF000857">
    <property type="entry name" value="PAPS_reductase"/>
    <property type="match status" value="1"/>
</dbReference>
<dbReference type="SUPFAM" id="SSF52402">
    <property type="entry name" value="Adenine nucleotide alpha hydrolases-like"/>
    <property type="match status" value="1"/>
</dbReference>
<keyword id="KW-0963">Cytoplasm</keyword>
<keyword id="KW-0560">Oxidoreductase</keyword>
<keyword id="KW-1185">Reference proteome</keyword>
<organism>
    <name type="scientific">Baumannia cicadellinicola subsp. Homalodisca coagulata</name>
    <dbReference type="NCBI Taxonomy" id="374463"/>
    <lineage>
        <taxon>Bacteria</taxon>
        <taxon>Pseudomonadati</taxon>
        <taxon>Pseudomonadota</taxon>
        <taxon>Gammaproteobacteria</taxon>
        <taxon>Candidatus Palibaumannia</taxon>
    </lineage>
</organism>
<accession>Q1LTP3</accession>
<gene>
    <name evidence="1" type="primary">cysH</name>
    <name type="ordered locus">BCI_0216</name>
</gene>
<feature type="chain" id="PRO_1000008919" description="Phosphoadenosine 5'-phosphosulfate reductase">
    <location>
        <begin position="1"/>
        <end position="245"/>
    </location>
</feature>
<feature type="active site" description="Nucleophile; cysteine thiosulfonate intermediate" evidence="1">
    <location>
        <position position="239"/>
    </location>
</feature>
<name>CYSH_BAUCH</name>
<protein>
    <recommendedName>
        <fullName evidence="1">Phosphoadenosine 5'-phosphosulfate reductase</fullName>
        <shortName evidence="1">PAPS reductase</shortName>
        <ecNumber evidence="1">1.8.4.8</ecNumber>
    </recommendedName>
    <alternativeName>
        <fullName evidence="1">3'-phosphoadenylylsulfate reductase</fullName>
    </alternativeName>
    <alternativeName>
        <fullName evidence="1">PAPS reductase, thioredoxin dependent</fullName>
    </alternativeName>
    <alternativeName>
        <fullName evidence="1">PAPS sulfotransferase</fullName>
    </alternativeName>
    <alternativeName>
        <fullName evidence="1">PAdoPS reductase</fullName>
    </alternativeName>
</protein>
<proteinExistence type="inferred from homology"/>
<sequence>MKVLDLRELNAMDKSQQTEAMTTVNLQLENMTAEHRVSWALEHLPQPAVLSSSFGIQAAVSLHLVTSQQPNIPVILTDTGYLFPETYQFIDQLTEQLKLNLKVFRAYISPAWQEARYGKLWEQGIKGIQLYNKINKVEPMNRALIQLGSLTWFAGLRRTQSSSRSKLPVLAVQQCLFKLLPIIDWDNRQVHSYLKKHGLNYHPLWEQGYLSVGDTHTTCKWTPGMNEEDTRFFGLKRECGIHEEK</sequence>
<evidence type="ECO:0000255" key="1">
    <source>
        <dbReference type="HAMAP-Rule" id="MF_00063"/>
    </source>
</evidence>
<comment type="function">
    <text evidence="1">Catalyzes the formation of sulfite from phosphoadenosine 5'-phosphosulfate (PAPS) using thioredoxin as an electron donor.</text>
</comment>
<comment type="catalytic activity">
    <reaction evidence="1">
        <text>[thioredoxin]-disulfide + sulfite + adenosine 3',5'-bisphosphate + 2 H(+) = [thioredoxin]-dithiol + 3'-phosphoadenylyl sulfate</text>
        <dbReference type="Rhea" id="RHEA:11724"/>
        <dbReference type="Rhea" id="RHEA-COMP:10698"/>
        <dbReference type="Rhea" id="RHEA-COMP:10700"/>
        <dbReference type="ChEBI" id="CHEBI:15378"/>
        <dbReference type="ChEBI" id="CHEBI:17359"/>
        <dbReference type="ChEBI" id="CHEBI:29950"/>
        <dbReference type="ChEBI" id="CHEBI:50058"/>
        <dbReference type="ChEBI" id="CHEBI:58339"/>
        <dbReference type="ChEBI" id="CHEBI:58343"/>
        <dbReference type="EC" id="1.8.4.8"/>
    </reaction>
</comment>
<comment type="pathway">
    <text evidence="1">Sulfur metabolism; hydrogen sulfide biosynthesis; sulfite from sulfate: step 3/3.</text>
</comment>
<comment type="subcellular location">
    <subcellularLocation>
        <location evidence="1">Cytoplasm</location>
    </subcellularLocation>
</comment>
<comment type="similarity">
    <text evidence="1">Belongs to the PAPS reductase family. CysH subfamily.</text>
</comment>
<reference key="1">
    <citation type="journal article" date="2006" name="PLoS Biol.">
        <title>Metabolic complementarity and genomics of the dual bacterial symbiosis of sharpshooters.</title>
        <authorList>
            <person name="Wu D."/>
            <person name="Daugherty S.C."/>
            <person name="Van Aken S.E."/>
            <person name="Pai G.H."/>
            <person name="Watkins K.L."/>
            <person name="Khouri H."/>
            <person name="Tallon L.J."/>
            <person name="Zaborsky J.M."/>
            <person name="Dunbar H.E."/>
            <person name="Tran P.L."/>
            <person name="Moran N.A."/>
            <person name="Eisen J.A."/>
        </authorList>
    </citation>
    <scope>NUCLEOTIDE SEQUENCE [LARGE SCALE GENOMIC DNA]</scope>
</reference>